<keyword id="KW-0025">Alternative splicing</keyword>
<keyword id="KW-0539">Nucleus</keyword>
<keyword id="KW-0597">Phosphoprotein</keyword>
<keyword id="KW-0611">Plant defense</keyword>
<keyword id="KW-1185">Reference proteome</keyword>
<sequence>MENSPRYREATNLIPSPRCHNSNNSCGMSSSSESNKPPTTPTRHVTTRSESGNPYPTTFVQADTSSFKQVVQMLTGSAERPKHGSSLKPNPTHHQPDPRSTPSSFSIPPIKAVPNKKQSSSSASGFRLYERRNSMKNLKINPLNPVFNPVNSAFSPRKPEILSPSILDFPSLVLSPVTPLIPDPFDRSGSSNQSPNELAAEEKAMKERGFYLHPSPATTPMDPEPRLLPLFPVTSPRVSGSSSASTS</sequence>
<dbReference type="EMBL" id="AC021044">
    <property type="protein sequence ID" value="AAF98427.1"/>
    <property type="status" value="ALT_SEQ"/>
    <property type="molecule type" value="Genomic_DNA"/>
</dbReference>
<dbReference type="EMBL" id="CP002684">
    <property type="protein sequence ID" value="AEE30940.1"/>
    <property type="molecule type" value="Genomic_DNA"/>
</dbReference>
<dbReference type="EMBL" id="AF370468">
    <property type="protein sequence ID" value="AAK43845.1"/>
    <property type="molecule type" value="mRNA"/>
</dbReference>
<dbReference type="EMBL" id="BT020398">
    <property type="protein sequence ID" value="AAV97789.1"/>
    <property type="molecule type" value="mRNA"/>
</dbReference>
<dbReference type="EMBL" id="BT020477">
    <property type="protein sequence ID" value="AAW38978.1"/>
    <property type="molecule type" value="mRNA"/>
</dbReference>
<dbReference type="EMBL" id="AY086070">
    <property type="protein sequence ID" value="AAM67358.1"/>
    <property type="molecule type" value="mRNA"/>
</dbReference>
<dbReference type="PIR" id="A86409">
    <property type="entry name" value="A86409"/>
</dbReference>
<dbReference type="RefSeq" id="NP_564303.2">
    <molecule id="Q5M750-1"/>
    <property type="nucleotide sequence ID" value="NM_102593.3"/>
</dbReference>
<dbReference type="FunCoup" id="Q5M750">
    <property type="interactions" value="1317"/>
</dbReference>
<dbReference type="STRING" id="3702.Q5M750"/>
<dbReference type="iPTMnet" id="Q5M750"/>
<dbReference type="PaxDb" id="3702-AT1G28280.1"/>
<dbReference type="EnsemblPlants" id="AT1G28280.1">
    <molecule id="Q5M750-1"/>
    <property type="protein sequence ID" value="AT1G28280.1"/>
    <property type="gene ID" value="AT1G28280"/>
</dbReference>
<dbReference type="GeneID" id="839722"/>
<dbReference type="Gramene" id="AT1G28280.1">
    <molecule id="Q5M750-1"/>
    <property type="protein sequence ID" value="AT1G28280.1"/>
    <property type="gene ID" value="AT1G28280"/>
</dbReference>
<dbReference type="KEGG" id="ath:AT1G28280"/>
<dbReference type="Araport" id="AT1G28280"/>
<dbReference type="TAIR" id="AT1G28280">
    <property type="gene designation" value="MVQ1"/>
</dbReference>
<dbReference type="eggNOG" id="ENOG502RIDK">
    <property type="taxonomic scope" value="Eukaryota"/>
</dbReference>
<dbReference type="HOGENOM" id="CLU_069496_0_0_1"/>
<dbReference type="InParanoid" id="Q5M750"/>
<dbReference type="OrthoDB" id="784396at2759"/>
<dbReference type="PRO" id="PR:Q5M750"/>
<dbReference type="Proteomes" id="UP000006548">
    <property type="component" value="Chromosome 1"/>
</dbReference>
<dbReference type="ExpressionAtlas" id="Q5M750">
    <property type="expression patterns" value="baseline and differential"/>
</dbReference>
<dbReference type="GO" id="GO:0005634">
    <property type="term" value="C:nucleus"/>
    <property type="evidence" value="ECO:0007669"/>
    <property type="project" value="UniProtKB-SubCell"/>
</dbReference>
<dbReference type="GO" id="GO:0006952">
    <property type="term" value="P:defense response"/>
    <property type="evidence" value="ECO:0007669"/>
    <property type="project" value="UniProtKB-KW"/>
</dbReference>
<dbReference type="GO" id="GO:0051245">
    <property type="term" value="P:negative regulation of cellular defense response"/>
    <property type="evidence" value="ECO:0000315"/>
    <property type="project" value="UniProtKB"/>
</dbReference>
<dbReference type="GO" id="GO:0043433">
    <property type="term" value="P:negative regulation of DNA-binding transcription factor activity"/>
    <property type="evidence" value="ECO:0000314"/>
    <property type="project" value="UniProtKB"/>
</dbReference>
<dbReference type="InterPro" id="IPR008889">
    <property type="entry name" value="VQ"/>
</dbReference>
<dbReference type="InterPro" id="IPR039611">
    <property type="entry name" value="VQ_4/11/13/19/31/33"/>
</dbReference>
<dbReference type="PANTHER" id="PTHR33402">
    <property type="entry name" value="VQ MOTIF-CONTAINING PROTEIN 11-LIKE"/>
    <property type="match status" value="1"/>
</dbReference>
<dbReference type="PANTHER" id="PTHR33402:SF16">
    <property type="entry name" value="VQ MOTIF-CONTAINING PROTEIN 13-RELATED"/>
    <property type="match status" value="1"/>
</dbReference>
<dbReference type="Pfam" id="PF05678">
    <property type="entry name" value="VQ"/>
    <property type="match status" value="1"/>
</dbReference>
<protein>
    <recommendedName>
        <fullName evidence="7">VQ motif-containing protein 4</fullName>
        <shortName evidence="7">AtVQ4</shortName>
    </recommendedName>
    <alternativeName>
        <fullName evidence="8">MPK3/6-targeted VQ-motif-containing protein 1</fullName>
    </alternativeName>
</protein>
<feature type="chain" id="PRO_0000432308" description="VQ motif-containing protein 4">
    <location>
        <begin position="1"/>
        <end position="247"/>
    </location>
</feature>
<feature type="region of interest" description="Disordered" evidence="5">
    <location>
        <begin position="1"/>
        <end position="128"/>
    </location>
</feature>
<feature type="region of interest" description="Disordered" evidence="5">
    <location>
        <begin position="184"/>
        <end position="247"/>
    </location>
</feature>
<feature type="short sequence motif" description="VQ" evidence="9">
    <location>
        <begin position="67"/>
        <end position="76"/>
    </location>
</feature>
<feature type="compositionally biased region" description="Low complexity" evidence="5">
    <location>
        <begin position="21"/>
        <end position="37"/>
    </location>
</feature>
<feature type="compositionally biased region" description="Polar residues" evidence="5">
    <location>
        <begin position="48"/>
        <end position="75"/>
    </location>
</feature>
<feature type="compositionally biased region" description="Polar residues" evidence="5">
    <location>
        <begin position="87"/>
        <end position="106"/>
    </location>
</feature>
<feature type="compositionally biased region" description="Basic and acidic residues" evidence="5">
    <location>
        <begin position="200"/>
        <end position="210"/>
    </location>
</feature>
<feature type="compositionally biased region" description="Polar residues" evidence="5">
    <location>
        <begin position="236"/>
        <end position="247"/>
    </location>
</feature>
<feature type="modified residue" description="Phosphoserine" evidence="6">
    <location>
        <position position="16"/>
    </location>
</feature>
<feature type="modified residue" description="Phosphoserine" evidence="6">
    <location>
        <position position="106"/>
    </location>
</feature>
<feature type="modified residue" description="Phosphoserine" evidence="6">
    <location>
        <position position="155"/>
    </location>
</feature>
<feature type="modified residue" description="Phosphoserine" evidence="2">
    <location>
        <position position="163"/>
    </location>
</feature>
<feature type="modified residue" description="Phosphoserine" evidence="3">
    <location>
        <position position="165"/>
    </location>
</feature>
<feature type="modified residue" description="Phosphoserine" evidence="3">
    <location>
        <position position="175"/>
    </location>
</feature>
<feature type="modified residue" description="Phosphothreonine" evidence="3">
    <location>
        <position position="178"/>
    </location>
</feature>
<feature type="modified residue" description="Phosphoserine" evidence="6">
    <location>
        <position position="194"/>
    </location>
</feature>
<feature type="modified residue" description="Phosphoserine" evidence="6">
    <location>
        <position position="215"/>
    </location>
</feature>
<feature type="modified residue" description="Phosphothreonine" evidence="6">
    <location>
        <position position="219"/>
    </location>
</feature>
<feature type="modified residue" description="Phosphothreonine" evidence="1">
    <location>
        <position position="234"/>
    </location>
</feature>
<feature type="modified residue" description="Phosphoserine" evidence="3">
    <location>
        <position position="235"/>
    </location>
</feature>
<feature type="modified residue" description="Phosphoserine" evidence="1">
    <location>
        <position position="239"/>
    </location>
</feature>
<feature type="modified residue" description="Phosphoserine" evidence="1">
    <location>
        <position position="243"/>
    </location>
</feature>
<feature type="sequence conflict" description="In Ref. 3; AAK43845." evidence="9" ref="3">
    <original>SESNKPPT</original>
    <variation>RESNNPPS</variation>
    <location>
        <begin position="32"/>
        <end position="39"/>
    </location>
</feature>
<feature type="sequence conflict" description="In Ref. 3; AAK43845." evidence="9" ref="3">
    <original>V</original>
    <variation>D</variation>
    <location>
        <position position="60"/>
    </location>
</feature>
<feature type="sequence conflict" description="In Ref. 3; AAK43845." evidence="9" ref="3">
    <original>A</original>
    <variation>G</variation>
    <location>
        <position position="78"/>
    </location>
</feature>
<feature type="sequence conflict" description="In Ref. 3; AAK43845." evidence="9" ref="3">
    <original>L</original>
    <variation>I</variation>
    <location>
        <position position="87"/>
    </location>
</feature>
<name>VQ4_ARATH</name>
<evidence type="ECO:0000250" key="1">
    <source>
        <dbReference type="UniProtKB" id="O23660"/>
    </source>
</evidence>
<evidence type="ECO:0000250" key="2">
    <source>
        <dbReference type="UniProtKB" id="Q9FHZ3"/>
    </source>
</evidence>
<evidence type="ECO:0000250" key="3">
    <source>
        <dbReference type="UniProtKB" id="Q9LDZ1"/>
    </source>
</evidence>
<evidence type="ECO:0000250" key="4">
    <source>
        <dbReference type="UniProtKB" id="Q9M9F0"/>
    </source>
</evidence>
<evidence type="ECO:0000256" key="5">
    <source>
        <dbReference type="SAM" id="MobiDB-lite"/>
    </source>
</evidence>
<evidence type="ECO:0000269" key="6">
    <source>
    </source>
</evidence>
<evidence type="ECO:0000303" key="7">
    <source>
    </source>
</evidence>
<evidence type="ECO:0000303" key="8">
    <source>
    </source>
</evidence>
<evidence type="ECO:0000305" key="9"/>
<evidence type="ECO:0000312" key="10">
    <source>
        <dbReference type="Araport" id="AT1G28280"/>
    </source>
</evidence>
<evidence type="ECO:0000312" key="11">
    <source>
        <dbReference type="EMBL" id="AAF98427.1"/>
    </source>
</evidence>
<accession>Q5M750</accession>
<accession>Q8LDD4</accession>
<accession>Q94K19</accession>
<accession>Q9FZA1</accession>
<organism>
    <name type="scientific">Arabidopsis thaliana</name>
    <name type="common">Mouse-ear cress</name>
    <dbReference type="NCBI Taxonomy" id="3702"/>
    <lineage>
        <taxon>Eukaryota</taxon>
        <taxon>Viridiplantae</taxon>
        <taxon>Streptophyta</taxon>
        <taxon>Embryophyta</taxon>
        <taxon>Tracheophyta</taxon>
        <taxon>Spermatophyta</taxon>
        <taxon>Magnoliopsida</taxon>
        <taxon>eudicotyledons</taxon>
        <taxon>Gunneridae</taxon>
        <taxon>Pentapetalae</taxon>
        <taxon>rosids</taxon>
        <taxon>malvids</taxon>
        <taxon>Brassicales</taxon>
        <taxon>Brassicaceae</taxon>
        <taxon>Camelineae</taxon>
        <taxon>Arabidopsis</taxon>
    </lineage>
</organism>
<reference key="1">
    <citation type="journal article" date="2000" name="Nature">
        <title>Sequence and analysis of chromosome 1 of the plant Arabidopsis thaliana.</title>
        <authorList>
            <person name="Theologis A."/>
            <person name="Ecker J.R."/>
            <person name="Palm C.J."/>
            <person name="Federspiel N.A."/>
            <person name="Kaul S."/>
            <person name="White O."/>
            <person name="Alonso J."/>
            <person name="Altafi H."/>
            <person name="Araujo R."/>
            <person name="Bowman C.L."/>
            <person name="Brooks S.Y."/>
            <person name="Buehler E."/>
            <person name="Chan A."/>
            <person name="Chao Q."/>
            <person name="Chen H."/>
            <person name="Cheuk R.F."/>
            <person name="Chin C.W."/>
            <person name="Chung M.K."/>
            <person name="Conn L."/>
            <person name="Conway A.B."/>
            <person name="Conway A.R."/>
            <person name="Creasy T.H."/>
            <person name="Dewar K."/>
            <person name="Dunn P."/>
            <person name="Etgu P."/>
            <person name="Feldblyum T.V."/>
            <person name="Feng J.-D."/>
            <person name="Fong B."/>
            <person name="Fujii C.Y."/>
            <person name="Gill J.E."/>
            <person name="Goldsmith A.D."/>
            <person name="Haas B."/>
            <person name="Hansen N.F."/>
            <person name="Hughes B."/>
            <person name="Huizar L."/>
            <person name="Hunter J.L."/>
            <person name="Jenkins J."/>
            <person name="Johnson-Hopson C."/>
            <person name="Khan S."/>
            <person name="Khaykin E."/>
            <person name="Kim C.J."/>
            <person name="Koo H.L."/>
            <person name="Kremenetskaia I."/>
            <person name="Kurtz D.B."/>
            <person name="Kwan A."/>
            <person name="Lam B."/>
            <person name="Langin-Hooper S."/>
            <person name="Lee A."/>
            <person name="Lee J.M."/>
            <person name="Lenz C.A."/>
            <person name="Li J.H."/>
            <person name="Li Y.-P."/>
            <person name="Lin X."/>
            <person name="Liu S.X."/>
            <person name="Liu Z.A."/>
            <person name="Luros J.S."/>
            <person name="Maiti R."/>
            <person name="Marziali A."/>
            <person name="Militscher J."/>
            <person name="Miranda M."/>
            <person name="Nguyen M."/>
            <person name="Nierman W.C."/>
            <person name="Osborne B.I."/>
            <person name="Pai G."/>
            <person name="Peterson J."/>
            <person name="Pham P.K."/>
            <person name="Rizzo M."/>
            <person name="Rooney T."/>
            <person name="Rowley D."/>
            <person name="Sakano H."/>
            <person name="Salzberg S.L."/>
            <person name="Schwartz J.R."/>
            <person name="Shinn P."/>
            <person name="Southwick A.M."/>
            <person name="Sun H."/>
            <person name="Tallon L.J."/>
            <person name="Tambunga G."/>
            <person name="Toriumi M.J."/>
            <person name="Town C.D."/>
            <person name="Utterback T."/>
            <person name="Van Aken S."/>
            <person name="Vaysberg M."/>
            <person name="Vysotskaia V.S."/>
            <person name="Walker M."/>
            <person name="Wu D."/>
            <person name="Yu G."/>
            <person name="Fraser C.M."/>
            <person name="Venter J.C."/>
            <person name="Davis R.W."/>
        </authorList>
    </citation>
    <scope>NUCLEOTIDE SEQUENCE [LARGE SCALE GENOMIC DNA]</scope>
    <source>
        <strain>cv. Columbia</strain>
    </source>
</reference>
<reference key="2">
    <citation type="journal article" date="2017" name="Plant J.">
        <title>Araport11: a complete reannotation of the Arabidopsis thaliana reference genome.</title>
        <authorList>
            <person name="Cheng C.Y."/>
            <person name="Krishnakumar V."/>
            <person name="Chan A.P."/>
            <person name="Thibaud-Nissen F."/>
            <person name="Schobel S."/>
            <person name="Town C.D."/>
        </authorList>
    </citation>
    <scope>GENOME REANNOTATION</scope>
    <source>
        <strain>cv. Columbia</strain>
    </source>
</reference>
<reference key="3">
    <citation type="journal article" date="2003" name="Science">
        <title>Empirical analysis of transcriptional activity in the Arabidopsis genome.</title>
        <authorList>
            <person name="Yamada K."/>
            <person name="Lim J."/>
            <person name="Dale J.M."/>
            <person name="Chen H."/>
            <person name="Shinn P."/>
            <person name="Palm C.J."/>
            <person name="Southwick A.M."/>
            <person name="Wu H.C."/>
            <person name="Kim C.J."/>
            <person name="Nguyen M."/>
            <person name="Pham P.K."/>
            <person name="Cheuk R.F."/>
            <person name="Karlin-Newmann G."/>
            <person name="Liu S.X."/>
            <person name="Lam B."/>
            <person name="Sakano H."/>
            <person name="Wu T."/>
            <person name="Yu G."/>
            <person name="Miranda M."/>
            <person name="Quach H.L."/>
            <person name="Tripp M."/>
            <person name="Chang C.H."/>
            <person name="Lee J.M."/>
            <person name="Toriumi M.J."/>
            <person name="Chan M.M."/>
            <person name="Tang C.C."/>
            <person name="Onodera C.S."/>
            <person name="Deng J.M."/>
            <person name="Akiyama K."/>
            <person name="Ansari Y."/>
            <person name="Arakawa T."/>
            <person name="Banh J."/>
            <person name="Banno F."/>
            <person name="Bowser L."/>
            <person name="Brooks S.Y."/>
            <person name="Carninci P."/>
            <person name="Chao Q."/>
            <person name="Choy N."/>
            <person name="Enju A."/>
            <person name="Goldsmith A.D."/>
            <person name="Gurjal M."/>
            <person name="Hansen N.F."/>
            <person name="Hayashizaki Y."/>
            <person name="Johnson-Hopson C."/>
            <person name="Hsuan V.W."/>
            <person name="Iida K."/>
            <person name="Karnes M."/>
            <person name="Khan S."/>
            <person name="Koesema E."/>
            <person name="Ishida J."/>
            <person name="Jiang P.X."/>
            <person name="Jones T."/>
            <person name="Kawai J."/>
            <person name="Kamiya A."/>
            <person name="Meyers C."/>
            <person name="Nakajima M."/>
            <person name="Narusaka M."/>
            <person name="Seki M."/>
            <person name="Sakurai T."/>
            <person name="Satou M."/>
            <person name="Tamse R."/>
            <person name="Vaysberg M."/>
            <person name="Wallender E.K."/>
            <person name="Wong C."/>
            <person name="Yamamura Y."/>
            <person name="Yuan S."/>
            <person name="Shinozaki K."/>
            <person name="Davis R.W."/>
            <person name="Theologis A."/>
            <person name="Ecker J.R."/>
        </authorList>
    </citation>
    <scope>NUCLEOTIDE SEQUENCE [LARGE SCALE MRNA]</scope>
    <source>
        <strain>cv. Columbia</strain>
    </source>
</reference>
<reference key="4">
    <citation type="submission" date="2005-01" db="EMBL/GenBank/DDBJ databases">
        <title>Arabidopsis ORF clones.</title>
        <authorList>
            <person name="Kim C.J."/>
            <person name="Chen H."/>
            <person name="Cheuk R.F."/>
            <person name="Shinn P."/>
            <person name="Ecker J.R."/>
        </authorList>
    </citation>
    <scope>NUCLEOTIDE SEQUENCE [LARGE SCALE MRNA]</scope>
    <source>
        <strain>cv. Columbia</strain>
    </source>
</reference>
<reference key="5">
    <citation type="submission" date="2002-03" db="EMBL/GenBank/DDBJ databases">
        <title>Full-length cDNA from Arabidopsis thaliana.</title>
        <authorList>
            <person name="Brover V.V."/>
            <person name="Troukhan M.E."/>
            <person name="Alexandrov N.A."/>
            <person name="Lu Y.-P."/>
            <person name="Flavell R.B."/>
            <person name="Feldmann K.A."/>
        </authorList>
    </citation>
    <scope>NUCLEOTIDE SEQUENCE [LARGE SCALE MRNA] OF 107-247</scope>
</reference>
<reference key="6">
    <citation type="journal article" date="2012" name="Plant Physiol.">
        <title>Structural and functional analysis of VQ motif-containing proteins in Arabidopsis as interacting proteins of WRKY transcription factors.</title>
        <authorList>
            <person name="Cheng Y."/>
            <person name="Zhou Y."/>
            <person name="Yang Y."/>
            <person name="Chi Y.J."/>
            <person name="Zhou J."/>
            <person name="Chen J.Y."/>
            <person name="Wang F."/>
            <person name="Fan B."/>
            <person name="Shi K."/>
            <person name="Zhou Y.H."/>
            <person name="Yu J.Q."/>
            <person name="Chen Z."/>
        </authorList>
    </citation>
    <scope>GENE FAMILY</scope>
    <scope>NOMENCLATURE</scope>
</reference>
<reference key="7">
    <citation type="journal article" date="2014" name="New Phytol.">
        <title>The Arabidopsis thaliana mitogen-activated protein kinases MPK3 and MPK6 target a subclass of 'VQ-motif'-containing proteins to regulate immune responses.</title>
        <authorList>
            <person name="Pecher P."/>
            <person name="Eschen-Lippold L."/>
            <person name="Herklotz S."/>
            <person name="Kuhle K."/>
            <person name="Naumann K."/>
            <person name="Bethke G."/>
            <person name="Uhrig J."/>
            <person name="Weyhe M."/>
            <person name="Scheel D."/>
            <person name="Lee J."/>
        </authorList>
    </citation>
    <scope>FUNCTION</scope>
    <scope>IDENTIFICATION BY MASS SPECTROMETRY</scope>
    <scope>INTERACTION WITH MPK3 AND MPK6</scope>
    <scope>PHOSPHORYLATION AT SER-16; SER-106; SER-155; SER-194; SER-215 AND THR-219</scope>
</reference>
<comment type="function">
    <text evidence="6">Acts as a negative regulator of WRKY33 transcription factor activity in the promotion of defense gene expression. Acts as a negative regulator of pathogen-associated molecular pattern (PAMP)-induced responses to modulate resistance to pathogens.</text>
</comment>
<comment type="subunit">
    <text evidence="6">Interacts with MPK3 and MPK6.</text>
</comment>
<comment type="subcellular location">
    <subcellularLocation>
        <location evidence="4">Nucleus</location>
    </subcellularLocation>
</comment>
<comment type="alternative products">
    <event type="alternative splicing"/>
    <isoform>
        <id>Q5M750-1</id>
        <name>1</name>
        <sequence type="displayed"/>
    </isoform>
    <text evidence="9">A number of isoforms are produced. According to EST sequences.</text>
</comment>
<comment type="PTM">
    <text evidence="6">Phosphorylated on serine and threonine residues by MPK6 following treatment with the pathogen-associated molecular pattern (PAMP) flg22. MAP kinase-mediated phosphorylation after PAMP elicitation causes degradation of VQ4, allowing WRKY33 to promote transcription from defense genes.</text>
</comment>
<comment type="sequence caution" evidence="9">
    <conflict type="erroneous gene model prediction">
        <sequence resource="EMBL-CDS" id="AAF98427"/>
    </conflict>
</comment>
<proteinExistence type="evidence at protein level"/>
<gene>
    <name evidence="7" type="primary">VQ4</name>
    <name evidence="8" type="synonym">MVQ1</name>
    <name evidence="10" type="ordered locus">At1g28280</name>
    <name evidence="11" type="ORF">F3H9.7</name>
</gene>